<sequence length="139" mass="15922">MANAASGMAVHDDCKLKFMELKTKRTHRFIIYKIEELQKQVIVEKIGEPGQTHEDLAASLPADECRYAIFDFDFVSSEGVPRSRIFFVAWSPDTARVRSKMIYASSKDRFKRELDGIQVELQATDPTEMDLDVFKSRAN</sequence>
<organism>
    <name type="scientific">Arabidopsis thaliana</name>
    <name type="common">Mouse-ear cress</name>
    <dbReference type="NCBI Taxonomy" id="3702"/>
    <lineage>
        <taxon>Eukaryota</taxon>
        <taxon>Viridiplantae</taxon>
        <taxon>Streptophyta</taxon>
        <taxon>Embryophyta</taxon>
        <taxon>Tracheophyta</taxon>
        <taxon>Spermatophyta</taxon>
        <taxon>Magnoliopsida</taxon>
        <taxon>eudicotyledons</taxon>
        <taxon>Gunneridae</taxon>
        <taxon>Pentapetalae</taxon>
        <taxon>rosids</taxon>
        <taxon>malvids</taxon>
        <taxon>Brassicales</taxon>
        <taxon>Brassicaceae</taxon>
        <taxon>Camelineae</taxon>
        <taxon>Arabidopsis</taxon>
    </lineage>
</organism>
<name>ADF3_ARATH</name>
<dbReference type="EMBL" id="AF102821">
    <property type="protein sequence ID" value="AAD09109.1"/>
    <property type="molecule type" value="mRNA"/>
</dbReference>
<dbReference type="EMBL" id="AB015475">
    <property type="protein sequence ID" value="BAB08356.1"/>
    <property type="molecule type" value="Genomic_DNA"/>
</dbReference>
<dbReference type="EMBL" id="CP002688">
    <property type="protein sequence ID" value="AED97245.1"/>
    <property type="molecule type" value="Genomic_DNA"/>
</dbReference>
<dbReference type="EMBL" id="AF360169">
    <property type="protein sequence ID" value="AAK25879.1"/>
    <property type="molecule type" value="mRNA"/>
</dbReference>
<dbReference type="EMBL" id="AY050334">
    <property type="protein sequence ID" value="AAK91351.1"/>
    <property type="molecule type" value="mRNA"/>
</dbReference>
<dbReference type="EMBL" id="AY056345">
    <property type="protein sequence ID" value="AAL07194.1"/>
    <property type="molecule type" value="mRNA"/>
</dbReference>
<dbReference type="EMBL" id="AY094033">
    <property type="protein sequence ID" value="AAM16189.1"/>
    <property type="molecule type" value="mRNA"/>
</dbReference>
<dbReference type="EMBL" id="AY086069">
    <property type="protein sequence ID" value="AAM63276.1"/>
    <property type="molecule type" value="mRNA"/>
</dbReference>
<dbReference type="RefSeq" id="NP_851227.1">
    <molecule id="Q9ZSK4-1"/>
    <property type="nucleotide sequence ID" value="NM_180896.3"/>
</dbReference>
<dbReference type="SMR" id="Q9ZSK4"/>
<dbReference type="BioGRID" id="21354">
    <property type="interactions" value="5"/>
</dbReference>
<dbReference type="FunCoup" id="Q9ZSK4">
    <property type="interactions" value="3411"/>
</dbReference>
<dbReference type="IntAct" id="Q9ZSK4">
    <property type="interactions" value="3"/>
</dbReference>
<dbReference type="STRING" id="3702.Q9ZSK4"/>
<dbReference type="iPTMnet" id="Q9ZSK4"/>
<dbReference type="SwissPalm" id="Q9ZSK4"/>
<dbReference type="PaxDb" id="3702-AT5G59880.1"/>
<dbReference type="ProteomicsDB" id="244655">
    <molecule id="Q9ZSK4-1"/>
</dbReference>
<dbReference type="EnsemblPlants" id="AT5G59880.1">
    <molecule id="Q9ZSK4-1"/>
    <property type="protein sequence ID" value="AT5G59880.1"/>
    <property type="gene ID" value="AT5G59880"/>
</dbReference>
<dbReference type="GeneID" id="836110"/>
<dbReference type="Gramene" id="AT5G59880.1">
    <molecule id="Q9ZSK4-1"/>
    <property type="protein sequence ID" value="AT5G59880.1"/>
    <property type="gene ID" value="AT5G59880"/>
</dbReference>
<dbReference type="KEGG" id="ath:AT5G59880"/>
<dbReference type="Araport" id="AT5G59880"/>
<dbReference type="TAIR" id="AT5G59880">
    <property type="gene designation" value="ADF3"/>
</dbReference>
<dbReference type="eggNOG" id="KOG1735">
    <property type="taxonomic scope" value="Eukaryota"/>
</dbReference>
<dbReference type="HOGENOM" id="CLU_094004_2_2_1"/>
<dbReference type="InParanoid" id="Q9ZSK4"/>
<dbReference type="OMA" id="CEFSHAN"/>
<dbReference type="OrthoDB" id="1085426at2759"/>
<dbReference type="PhylomeDB" id="Q9ZSK4"/>
<dbReference type="CD-CODE" id="4299E36E">
    <property type="entry name" value="Nucleolus"/>
</dbReference>
<dbReference type="PRO" id="PR:Q9ZSK4"/>
<dbReference type="Proteomes" id="UP000006548">
    <property type="component" value="Chromosome 5"/>
</dbReference>
<dbReference type="ExpressionAtlas" id="Q9ZSK4">
    <property type="expression patterns" value="baseline and differential"/>
</dbReference>
<dbReference type="GO" id="GO:0015629">
    <property type="term" value="C:actin cytoskeleton"/>
    <property type="evidence" value="ECO:0007669"/>
    <property type="project" value="InterPro"/>
</dbReference>
<dbReference type="GO" id="GO:0009507">
    <property type="term" value="C:chloroplast"/>
    <property type="evidence" value="ECO:0007005"/>
    <property type="project" value="TAIR"/>
</dbReference>
<dbReference type="GO" id="GO:0005829">
    <property type="term" value="C:cytosol"/>
    <property type="evidence" value="ECO:0007005"/>
    <property type="project" value="TAIR"/>
</dbReference>
<dbReference type="GO" id="GO:0005739">
    <property type="term" value="C:mitochondrion"/>
    <property type="evidence" value="ECO:0007005"/>
    <property type="project" value="TAIR"/>
</dbReference>
<dbReference type="GO" id="GO:0005886">
    <property type="term" value="C:plasma membrane"/>
    <property type="evidence" value="ECO:0007005"/>
    <property type="project" value="TAIR"/>
</dbReference>
<dbReference type="GO" id="GO:0009506">
    <property type="term" value="C:plasmodesma"/>
    <property type="evidence" value="ECO:0007005"/>
    <property type="project" value="TAIR"/>
</dbReference>
<dbReference type="GO" id="GO:0009536">
    <property type="term" value="C:plastid"/>
    <property type="evidence" value="ECO:0007005"/>
    <property type="project" value="TAIR"/>
</dbReference>
<dbReference type="GO" id="GO:0003779">
    <property type="term" value="F:actin binding"/>
    <property type="evidence" value="ECO:0007669"/>
    <property type="project" value="UniProtKB-KW"/>
</dbReference>
<dbReference type="GO" id="GO:0030042">
    <property type="term" value="P:actin filament depolymerization"/>
    <property type="evidence" value="ECO:0000314"/>
    <property type="project" value="TAIR"/>
</dbReference>
<dbReference type="CDD" id="cd11286">
    <property type="entry name" value="ADF_cofilin_like"/>
    <property type="match status" value="1"/>
</dbReference>
<dbReference type="FunFam" id="3.40.20.10:FF:000025">
    <property type="entry name" value="Actin-depolymerizing factor 2"/>
    <property type="match status" value="1"/>
</dbReference>
<dbReference type="Gene3D" id="3.40.20.10">
    <property type="entry name" value="Severin"/>
    <property type="match status" value="1"/>
</dbReference>
<dbReference type="InterPro" id="IPR002108">
    <property type="entry name" value="ADF-H"/>
</dbReference>
<dbReference type="InterPro" id="IPR029006">
    <property type="entry name" value="ADF-H/Gelsolin-like_dom_sf"/>
</dbReference>
<dbReference type="InterPro" id="IPR017904">
    <property type="entry name" value="ADF/Cofilin"/>
</dbReference>
<dbReference type="PANTHER" id="PTHR11913">
    <property type="entry name" value="COFILIN-RELATED"/>
    <property type="match status" value="1"/>
</dbReference>
<dbReference type="Pfam" id="PF00241">
    <property type="entry name" value="Cofilin_ADF"/>
    <property type="match status" value="1"/>
</dbReference>
<dbReference type="SMART" id="SM00102">
    <property type="entry name" value="ADF"/>
    <property type="match status" value="1"/>
</dbReference>
<dbReference type="SUPFAM" id="SSF55753">
    <property type="entry name" value="Actin depolymerizing proteins"/>
    <property type="match status" value="1"/>
</dbReference>
<dbReference type="PROSITE" id="PS51263">
    <property type="entry name" value="ADF_H"/>
    <property type="match status" value="1"/>
</dbReference>
<evidence type="ECO:0000250" key="1">
    <source>
        <dbReference type="UniProtKB" id="Q39250"/>
    </source>
</evidence>
<evidence type="ECO:0000250" key="2">
    <source>
        <dbReference type="UniProtKB" id="Q39251"/>
    </source>
</evidence>
<evidence type="ECO:0000255" key="3">
    <source>
        <dbReference type="PROSITE-ProRule" id="PRU00599"/>
    </source>
</evidence>
<evidence type="ECO:0000269" key="4">
    <source>
    </source>
</evidence>
<evidence type="ECO:0000305" key="5"/>
<gene>
    <name type="primary">ADF3</name>
    <name type="ordered locus">At5g59880</name>
    <name type="ORF">MMN10.12</name>
</gene>
<proteinExistence type="evidence at protein level"/>
<accession>Q9ZSK4</accession>
<feature type="chain" id="PRO_0000214925" description="Actin-depolymerizing factor 3">
    <location>
        <begin position="1"/>
        <end position="139"/>
    </location>
</feature>
<feature type="domain" description="ADF-H" evidence="3">
    <location>
        <begin position="5"/>
        <end position="139"/>
    </location>
</feature>
<feature type="modified residue" description="Phosphoserine" evidence="1">
    <location>
        <position position="6"/>
    </location>
</feature>
<reference key="1">
    <citation type="journal article" date="2001" name="Plant Mol. Biol.">
        <title>Molecular identification and characterization of the Arabidopsis AtADF1, AtADF5 and AtADF6 genes.</title>
        <authorList>
            <person name="Dong C.-H."/>
            <person name="Kost B."/>
            <person name="Xia G.-X."/>
            <person name="Chua N.-H."/>
        </authorList>
    </citation>
    <scope>NUCLEOTIDE SEQUENCE [MRNA]</scope>
    <source>
        <strain>cv. Columbia</strain>
    </source>
</reference>
<reference key="2">
    <citation type="journal article" date="1998" name="DNA Res.">
        <title>Structural analysis of Arabidopsis thaliana chromosome 5. VII. Sequence features of the regions of 1,013,767 bp covered by sixteen physically assigned P1 and TAC clones.</title>
        <authorList>
            <person name="Nakamura Y."/>
            <person name="Sato S."/>
            <person name="Asamizu E."/>
            <person name="Kaneko T."/>
            <person name="Kotani H."/>
            <person name="Miyajima N."/>
            <person name="Tabata S."/>
        </authorList>
    </citation>
    <scope>NUCLEOTIDE SEQUENCE [LARGE SCALE GENOMIC DNA]</scope>
    <source>
        <strain>cv. Columbia</strain>
    </source>
</reference>
<reference key="3">
    <citation type="journal article" date="2017" name="Plant J.">
        <title>Araport11: a complete reannotation of the Arabidopsis thaliana reference genome.</title>
        <authorList>
            <person name="Cheng C.Y."/>
            <person name="Krishnakumar V."/>
            <person name="Chan A.P."/>
            <person name="Thibaud-Nissen F."/>
            <person name="Schobel S."/>
            <person name="Town C.D."/>
        </authorList>
    </citation>
    <scope>GENOME REANNOTATION</scope>
    <source>
        <strain>cv. Columbia</strain>
    </source>
</reference>
<reference key="4">
    <citation type="journal article" date="2003" name="Science">
        <title>Empirical analysis of transcriptional activity in the Arabidopsis genome.</title>
        <authorList>
            <person name="Yamada K."/>
            <person name="Lim J."/>
            <person name="Dale J.M."/>
            <person name="Chen H."/>
            <person name="Shinn P."/>
            <person name="Palm C.J."/>
            <person name="Southwick A.M."/>
            <person name="Wu H.C."/>
            <person name="Kim C.J."/>
            <person name="Nguyen M."/>
            <person name="Pham P.K."/>
            <person name="Cheuk R.F."/>
            <person name="Karlin-Newmann G."/>
            <person name="Liu S.X."/>
            <person name="Lam B."/>
            <person name="Sakano H."/>
            <person name="Wu T."/>
            <person name="Yu G."/>
            <person name="Miranda M."/>
            <person name="Quach H.L."/>
            <person name="Tripp M."/>
            <person name="Chang C.H."/>
            <person name="Lee J.M."/>
            <person name="Toriumi M.J."/>
            <person name="Chan M.M."/>
            <person name="Tang C.C."/>
            <person name="Onodera C.S."/>
            <person name="Deng J.M."/>
            <person name="Akiyama K."/>
            <person name="Ansari Y."/>
            <person name="Arakawa T."/>
            <person name="Banh J."/>
            <person name="Banno F."/>
            <person name="Bowser L."/>
            <person name="Brooks S.Y."/>
            <person name="Carninci P."/>
            <person name="Chao Q."/>
            <person name="Choy N."/>
            <person name="Enju A."/>
            <person name="Goldsmith A.D."/>
            <person name="Gurjal M."/>
            <person name="Hansen N.F."/>
            <person name="Hayashizaki Y."/>
            <person name="Johnson-Hopson C."/>
            <person name="Hsuan V.W."/>
            <person name="Iida K."/>
            <person name="Karnes M."/>
            <person name="Khan S."/>
            <person name="Koesema E."/>
            <person name="Ishida J."/>
            <person name="Jiang P.X."/>
            <person name="Jones T."/>
            <person name="Kawai J."/>
            <person name="Kamiya A."/>
            <person name="Meyers C."/>
            <person name="Nakajima M."/>
            <person name="Narusaka M."/>
            <person name="Seki M."/>
            <person name="Sakurai T."/>
            <person name="Satou M."/>
            <person name="Tamse R."/>
            <person name="Vaysberg M."/>
            <person name="Wallender E.K."/>
            <person name="Wong C."/>
            <person name="Yamamura Y."/>
            <person name="Yuan S."/>
            <person name="Shinozaki K."/>
            <person name="Davis R.W."/>
            <person name="Theologis A."/>
            <person name="Ecker J.R."/>
        </authorList>
    </citation>
    <scope>NUCLEOTIDE SEQUENCE [LARGE SCALE MRNA]</scope>
    <source>
        <strain>cv. Columbia</strain>
    </source>
</reference>
<reference key="5">
    <citation type="submission" date="2002-03" db="EMBL/GenBank/DDBJ databases">
        <title>Full-length cDNA from Arabidopsis thaliana.</title>
        <authorList>
            <person name="Brover V.V."/>
            <person name="Troukhan M.E."/>
            <person name="Alexandrov N.A."/>
            <person name="Lu Y.-P."/>
            <person name="Flavell R.B."/>
            <person name="Feldmann K.A."/>
        </authorList>
    </citation>
    <scope>NUCLEOTIDE SEQUENCE [LARGE SCALE MRNA]</scope>
</reference>
<reference key="6">
    <citation type="journal article" date="2006" name="J. Plant Physiol.">
        <title>Comparative study of rice and Arabidopsis actin-depolymerizing factors gene families.</title>
        <authorList>
            <person name="Feng Y."/>
            <person name="Liu Q."/>
            <person name="Xue Q."/>
        </authorList>
    </citation>
    <scope>GENE FAMILY</scope>
</reference>
<reference key="7">
    <citation type="journal article" date="2009" name="Plant Cell">
        <title>Actin-depolymerizing factor2-mediated actin dynamics are essential for root-knot nematode infection of Arabidopsis.</title>
        <authorList>
            <person name="Clement M."/>
            <person name="Ketelaar T."/>
            <person name="Rodiuc N."/>
            <person name="Banora M.Y."/>
            <person name="Smertenko A."/>
            <person name="Engler G."/>
            <person name="Abad P."/>
            <person name="Hussey P.J."/>
            <person name="de Almeida Engler J."/>
        </authorList>
    </citation>
    <scope>INDUCTION</scope>
</reference>
<protein>
    <recommendedName>
        <fullName>Actin-depolymerizing factor 3</fullName>
        <shortName>ADF-3</shortName>
        <shortName>AtADF3</shortName>
    </recommendedName>
</protein>
<comment type="function">
    <text evidence="2">Actin-depolymerizing protein. Severs actin filaments (F-actin) and binds to actin monomers.</text>
</comment>
<comment type="interaction">
    <interactant intactId="EBI-2009725">
        <id>Q9ZSK4</id>
    </interactant>
    <interactant intactId="EBI-979321">
        <id>Q39016</id>
        <label>CPK11</label>
    </interactant>
    <organismsDiffer>false</organismsDiffer>
    <experiments>5</experiments>
</comment>
<comment type="subcellular location">
    <subcellularLocation>
        <location evidence="1">Cytoplasm</location>
        <location evidence="1">Cytoskeleton</location>
    </subcellularLocation>
</comment>
<comment type="alternative products">
    <event type="alternative splicing"/>
    <isoform>
        <id>Q9ZSK4-1</id>
        <name>1</name>
        <sequence type="displayed"/>
    </isoform>
    <text>A number of isoforms are produced. According to EST sequences.</text>
</comment>
<comment type="induction">
    <text evidence="4">By the root-knot nematode Meloidogyne incognita.</text>
</comment>
<comment type="similarity">
    <text evidence="5">Belongs to the actin-binding proteins ADF family.</text>
</comment>
<keyword id="KW-0009">Actin-binding</keyword>
<keyword id="KW-0025">Alternative splicing</keyword>
<keyword id="KW-0963">Cytoplasm</keyword>
<keyword id="KW-0206">Cytoskeleton</keyword>
<keyword id="KW-0597">Phosphoprotein</keyword>
<keyword id="KW-1185">Reference proteome</keyword>